<accession>Q2T9R6</accession>
<proteinExistence type="evidence at transcript level"/>
<evidence type="ECO:0000250" key="1">
    <source>
        <dbReference type="UniProtKB" id="Q9JHW2"/>
    </source>
</evidence>
<evidence type="ECO:0000250" key="2">
    <source>
        <dbReference type="UniProtKB" id="Q9NQR4"/>
    </source>
</evidence>
<evidence type="ECO:0000255" key="3">
    <source>
        <dbReference type="PROSITE-ProRule" id="PRU00054"/>
    </source>
</evidence>
<evidence type="ECO:0000305" key="4"/>
<sequence>MATFRLALIQLQVSSIKSENLTRACGLIREASKQGAQIVSLPECFNSPYGTKYFPDYAEKIPGDSTQKLSEVAKECSMYVIGGSIPEKDAGKLYNTCAVFGPDGTLLVKHRKLHLFDIDVPGKITFQESETLSPGDSFSLFDTPYCRVGLGICYDIRFAELAQIYAQRGCQLLVYPGAFNLTTGPAHWELLQRGRAVDNQVYVATASPARDEKASYVAWGHSTVVNPWGEVLAKAGTEETIVYADIDLKKLAEIRQQIPIFSQKRSDLYEVEAKKS</sequence>
<dbReference type="EC" id="3.5.1.3" evidence="2"/>
<dbReference type="EMBL" id="BC111301">
    <property type="protein sequence ID" value="AAI11302.1"/>
    <property type="molecule type" value="mRNA"/>
</dbReference>
<dbReference type="RefSeq" id="NP_001033222.1">
    <property type="nucleotide sequence ID" value="NM_001038133.1"/>
</dbReference>
<dbReference type="SMR" id="Q2T9R6"/>
<dbReference type="FunCoup" id="Q2T9R6">
    <property type="interactions" value="2197"/>
</dbReference>
<dbReference type="STRING" id="9913.ENSBTAP00000006347"/>
<dbReference type="PaxDb" id="9913-ENSBTAP00000006347"/>
<dbReference type="PeptideAtlas" id="Q2T9R6"/>
<dbReference type="GeneID" id="520620"/>
<dbReference type="KEGG" id="bta:520620"/>
<dbReference type="CTD" id="56954"/>
<dbReference type="eggNOG" id="KOG0806">
    <property type="taxonomic scope" value="Eukaryota"/>
</dbReference>
<dbReference type="InParanoid" id="Q2T9R6"/>
<dbReference type="OrthoDB" id="10250282at2759"/>
<dbReference type="Proteomes" id="UP000009136">
    <property type="component" value="Unplaced"/>
</dbReference>
<dbReference type="GO" id="GO:0005737">
    <property type="term" value="C:cytoplasm"/>
    <property type="evidence" value="ECO:0007669"/>
    <property type="project" value="UniProtKB-SubCell"/>
</dbReference>
<dbReference type="GO" id="GO:0106008">
    <property type="term" value="F:2-oxoglutaramate amidase activity"/>
    <property type="evidence" value="ECO:0007669"/>
    <property type="project" value="RHEA"/>
</dbReference>
<dbReference type="GO" id="GO:0050152">
    <property type="term" value="F:omega-amidase activity"/>
    <property type="evidence" value="ECO:0000318"/>
    <property type="project" value="GO_Central"/>
</dbReference>
<dbReference type="GO" id="GO:0006528">
    <property type="term" value="P:asparagine metabolic process"/>
    <property type="evidence" value="ECO:0000318"/>
    <property type="project" value="GO_Central"/>
</dbReference>
<dbReference type="GO" id="GO:0006541">
    <property type="term" value="P:glutamine metabolic process"/>
    <property type="evidence" value="ECO:0000318"/>
    <property type="project" value="GO_Central"/>
</dbReference>
<dbReference type="GO" id="GO:0006107">
    <property type="term" value="P:oxaloacetate metabolic process"/>
    <property type="evidence" value="ECO:0000318"/>
    <property type="project" value="GO_Central"/>
</dbReference>
<dbReference type="CDD" id="cd07572">
    <property type="entry name" value="nit"/>
    <property type="match status" value="1"/>
</dbReference>
<dbReference type="FunFam" id="3.60.110.10:FF:000002">
    <property type="entry name" value="Nitrilase family member 2"/>
    <property type="match status" value="1"/>
</dbReference>
<dbReference type="Gene3D" id="3.60.110.10">
    <property type="entry name" value="Carbon-nitrogen hydrolase"/>
    <property type="match status" value="1"/>
</dbReference>
<dbReference type="InterPro" id="IPR003010">
    <property type="entry name" value="C-N_Hydrolase"/>
</dbReference>
<dbReference type="InterPro" id="IPR036526">
    <property type="entry name" value="C-N_Hydrolase_sf"/>
</dbReference>
<dbReference type="InterPro" id="IPR045254">
    <property type="entry name" value="Nit1/2_C-N_Hydrolase"/>
</dbReference>
<dbReference type="PANTHER" id="PTHR23088">
    <property type="entry name" value="NITRILASE-RELATED"/>
    <property type="match status" value="1"/>
</dbReference>
<dbReference type="PANTHER" id="PTHR23088:SF30">
    <property type="entry name" value="OMEGA-AMIDASE NIT2"/>
    <property type="match status" value="1"/>
</dbReference>
<dbReference type="Pfam" id="PF00795">
    <property type="entry name" value="CN_hydrolase"/>
    <property type="match status" value="1"/>
</dbReference>
<dbReference type="SUPFAM" id="SSF56317">
    <property type="entry name" value="Carbon-nitrogen hydrolase"/>
    <property type="match status" value="1"/>
</dbReference>
<dbReference type="PROSITE" id="PS50263">
    <property type="entry name" value="CN_HYDROLASE"/>
    <property type="match status" value="1"/>
</dbReference>
<protein>
    <recommendedName>
        <fullName>Omega-amidase NIT2</fullName>
        <ecNumber evidence="2">3.5.1.3</ecNumber>
    </recommendedName>
    <alternativeName>
        <fullName>Nitrilase homolog 2</fullName>
    </alternativeName>
</protein>
<gene>
    <name type="primary">NIT2</name>
</gene>
<name>NIT2_BOVIN</name>
<comment type="function">
    <text evidence="2">Has omega-amidase activity. The role of omega-amidase is to remove potentially toxic intermediates by converting 2-oxoglutaramate and 2-oxosuccinamate to biologically useful 2-oxoglutarate and oxaloacetate, respectively.</text>
</comment>
<comment type="catalytic activity">
    <reaction evidence="2">
        <text>2-oxoglutaramate + H2O = 2-oxoglutarate + NH4(+)</text>
        <dbReference type="Rhea" id="RHEA:32963"/>
        <dbReference type="ChEBI" id="CHEBI:15377"/>
        <dbReference type="ChEBI" id="CHEBI:16769"/>
        <dbReference type="ChEBI" id="CHEBI:16810"/>
        <dbReference type="ChEBI" id="CHEBI:28938"/>
        <dbReference type="EC" id="3.5.1.3"/>
    </reaction>
    <physiologicalReaction direction="left-to-right" evidence="2">
        <dbReference type="Rhea" id="RHEA:32964"/>
    </physiologicalReaction>
</comment>
<comment type="catalytic activity">
    <reaction evidence="2">
        <text>2-oxosuccinamate + H2O = oxaloacetate + NH4(+)</text>
        <dbReference type="Rhea" id="RHEA:59412"/>
        <dbReference type="ChEBI" id="CHEBI:15377"/>
        <dbReference type="ChEBI" id="CHEBI:16452"/>
        <dbReference type="ChEBI" id="CHEBI:28938"/>
        <dbReference type="ChEBI" id="CHEBI:57735"/>
        <dbReference type="EC" id="3.5.1.3"/>
    </reaction>
    <physiologicalReaction direction="left-to-right" evidence="2">
        <dbReference type="Rhea" id="RHEA:59413"/>
    </physiologicalReaction>
</comment>
<comment type="subunit">
    <text evidence="2">Homodimer.</text>
</comment>
<comment type="subcellular location">
    <subcellularLocation>
        <location evidence="2">Cytoplasm</location>
    </subcellularLocation>
</comment>
<comment type="similarity">
    <text evidence="4">Belongs to the carbon-nitrogen hydrolase superfamily. NIT1/NIT2 family.</text>
</comment>
<keyword id="KW-0007">Acetylation</keyword>
<keyword id="KW-0963">Cytoplasm</keyword>
<keyword id="KW-0378">Hydrolase</keyword>
<keyword id="KW-1185">Reference proteome</keyword>
<feature type="chain" id="PRO_0000320253" description="Omega-amidase NIT2">
    <location>
        <begin position="1"/>
        <end position="276"/>
    </location>
</feature>
<feature type="domain" description="CN hydrolase" evidence="3">
    <location>
        <begin position="4"/>
        <end position="248"/>
    </location>
</feature>
<feature type="active site" description="Proton acceptor" evidence="3">
    <location>
        <position position="43"/>
    </location>
</feature>
<feature type="active site" description="Proton donor" evidence="3">
    <location>
        <position position="112"/>
    </location>
</feature>
<feature type="active site" description="Nucleophile" evidence="3">
    <location>
        <position position="153"/>
    </location>
</feature>
<feature type="modified residue" description="N6-acetyllysine; alternate" evidence="1">
    <location>
        <position position="68"/>
    </location>
</feature>
<feature type="modified residue" description="N6-succinyllysine; alternate" evidence="1">
    <location>
        <position position="68"/>
    </location>
</feature>
<feature type="modified residue" description="N6-succinyllysine" evidence="1">
    <location>
        <position position="123"/>
    </location>
</feature>
<reference key="1">
    <citation type="submission" date="2005-12" db="EMBL/GenBank/DDBJ databases">
        <authorList>
            <consortium name="NIH - Mammalian Gene Collection (MGC) project"/>
        </authorList>
    </citation>
    <scope>NUCLEOTIDE SEQUENCE [LARGE SCALE MRNA]</scope>
    <source>
        <strain>Crossbred X Angus</strain>
        <tissue>Liver</tissue>
    </source>
</reference>
<organism>
    <name type="scientific">Bos taurus</name>
    <name type="common">Bovine</name>
    <dbReference type="NCBI Taxonomy" id="9913"/>
    <lineage>
        <taxon>Eukaryota</taxon>
        <taxon>Metazoa</taxon>
        <taxon>Chordata</taxon>
        <taxon>Craniata</taxon>
        <taxon>Vertebrata</taxon>
        <taxon>Euteleostomi</taxon>
        <taxon>Mammalia</taxon>
        <taxon>Eutheria</taxon>
        <taxon>Laurasiatheria</taxon>
        <taxon>Artiodactyla</taxon>
        <taxon>Ruminantia</taxon>
        <taxon>Pecora</taxon>
        <taxon>Bovidae</taxon>
        <taxon>Bovinae</taxon>
        <taxon>Bos</taxon>
    </lineage>
</organism>